<proteinExistence type="inferred from homology"/>
<dbReference type="EC" id="3.2.2.23" evidence="2"/>
<dbReference type="EC" id="4.2.99.18" evidence="2"/>
<dbReference type="EMBL" id="CP001120">
    <property type="protein sequence ID" value="ACF69993.1"/>
    <property type="molecule type" value="Genomic_DNA"/>
</dbReference>
<dbReference type="RefSeq" id="WP_001114508.1">
    <property type="nucleotide sequence ID" value="NC_011083.1"/>
</dbReference>
<dbReference type="SMR" id="B4T9C0"/>
<dbReference type="KEGG" id="seh:SeHA_C4052"/>
<dbReference type="HOGENOM" id="CLU_038423_1_1_6"/>
<dbReference type="Proteomes" id="UP000001866">
    <property type="component" value="Chromosome"/>
</dbReference>
<dbReference type="GO" id="GO:0034039">
    <property type="term" value="F:8-oxo-7,8-dihydroguanine DNA N-glycosylase activity"/>
    <property type="evidence" value="ECO:0007669"/>
    <property type="project" value="TreeGrafter"/>
</dbReference>
<dbReference type="GO" id="GO:0140078">
    <property type="term" value="F:class I DNA-(apurinic or apyrimidinic site) endonuclease activity"/>
    <property type="evidence" value="ECO:0007669"/>
    <property type="project" value="UniProtKB-EC"/>
</dbReference>
<dbReference type="GO" id="GO:0003684">
    <property type="term" value="F:damaged DNA binding"/>
    <property type="evidence" value="ECO:0007669"/>
    <property type="project" value="InterPro"/>
</dbReference>
<dbReference type="GO" id="GO:0008270">
    <property type="term" value="F:zinc ion binding"/>
    <property type="evidence" value="ECO:0007669"/>
    <property type="project" value="UniProtKB-UniRule"/>
</dbReference>
<dbReference type="GO" id="GO:0006284">
    <property type="term" value="P:base-excision repair"/>
    <property type="evidence" value="ECO:0007669"/>
    <property type="project" value="InterPro"/>
</dbReference>
<dbReference type="CDD" id="cd08966">
    <property type="entry name" value="EcFpg-like_N"/>
    <property type="match status" value="1"/>
</dbReference>
<dbReference type="FunFam" id="1.10.8.50:FF:000003">
    <property type="entry name" value="Formamidopyrimidine-DNA glycosylase"/>
    <property type="match status" value="1"/>
</dbReference>
<dbReference type="FunFam" id="3.20.190.10:FF:000001">
    <property type="entry name" value="Formamidopyrimidine-DNA glycosylase"/>
    <property type="match status" value="1"/>
</dbReference>
<dbReference type="Gene3D" id="1.10.8.50">
    <property type="match status" value="1"/>
</dbReference>
<dbReference type="Gene3D" id="3.20.190.10">
    <property type="entry name" value="MutM-like, N-terminal"/>
    <property type="match status" value="1"/>
</dbReference>
<dbReference type="HAMAP" id="MF_00103">
    <property type="entry name" value="Fapy_DNA_glycosyl"/>
    <property type="match status" value="1"/>
</dbReference>
<dbReference type="InterPro" id="IPR015886">
    <property type="entry name" value="DNA_glyclase/AP_lyase_DNA-bd"/>
</dbReference>
<dbReference type="InterPro" id="IPR015887">
    <property type="entry name" value="DNA_glyclase_Znf_dom_DNA_BS"/>
</dbReference>
<dbReference type="InterPro" id="IPR020629">
    <property type="entry name" value="Formamido-pyr_DNA_Glyclase"/>
</dbReference>
<dbReference type="InterPro" id="IPR012319">
    <property type="entry name" value="FPG_cat"/>
</dbReference>
<dbReference type="InterPro" id="IPR035937">
    <property type="entry name" value="MutM-like_N-ter"/>
</dbReference>
<dbReference type="InterPro" id="IPR010979">
    <property type="entry name" value="Ribosomal_uS13-like_H2TH"/>
</dbReference>
<dbReference type="InterPro" id="IPR000214">
    <property type="entry name" value="Znf_DNA_glyclase/AP_lyase"/>
</dbReference>
<dbReference type="InterPro" id="IPR010663">
    <property type="entry name" value="Znf_FPG/IleRS"/>
</dbReference>
<dbReference type="NCBIfam" id="TIGR00577">
    <property type="entry name" value="fpg"/>
    <property type="match status" value="1"/>
</dbReference>
<dbReference type="NCBIfam" id="NF002211">
    <property type="entry name" value="PRK01103.1"/>
    <property type="match status" value="1"/>
</dbReference>
<dbReference type="PANTHER" id="PTHR22993">
    <property type="entry name" value="FORMAMIDOPYRIMIDINE-DNA GLYCOSYLASE"/>
    <property type="match status" value="1"/>
</dbReference>
<dbReference type="PANTHER" id="PTHR22993:SF9">
    <property type="entry name" value="FORMAMIDOPYRIMIDINE-DNA GLYCOSYLASE"/>
    <property type="match status" value="1"/>
</dbReference>
<dbReference type="Pfam" id="PF01149">
    <property type="entry name" value="Fapy_DNA_glyco"/>
    <property type="match status" value="1"/>
</dbReference>
<dbReference type="Pfam" id="PF06831">
    <property type="entry name" value="H2TH"/>
    <property type="match status" value="1"/>
</dbReference>
<dbReference type="Pfam" id="PF06827">
    <property type="entry name" value="zf-FPG_IleRS"/>
    <property type="match status" value="1"/>
</dbReference>
<dbReference type="SMART" id="SM00898">
    <property type="entry name" value="Fapy_DNA_glyco"/>
    <property type="match status" value="1"/>
</dbReference>
<dbReference type="SMART" id="SM01232">
    <property type="entry name" value="H2TH"/>
    <property type="match status" value="1"/>
</dbReference>
<dbReference type="SUPFAM" id="SSF57716">
    <property type="entry name" value="Glucocorticoid receptor-like (DNA-binding domain)"/>
    <property type="match status" value="1"/>
</dbReference>
<dbReference type="SUPFAM" id="SSF81624">
    <property type="entry name" value="N-terminal domain of MutM-like DNA repair proteins"/>
    <property type="match status" value="1"/>
</dbReference>
<dbReference type="SUPFAM" id="SSF46946">
    <property type="entry name" value="S13-like H2TH domain"/>
    <property type="match status" value="1"/>
</dbReference>
<dbReference type="PROSITE" id="PS51068">
    <property type="entry name" value="FPG_CAT"/>
    <property type="match status" value="1"/>
</dbReference>
<dbReference type="PROSITE" id="PS01242">
    <property type="entry name" value="ZF_FPG_1"/>
    <property type="match status" value="1"/>
</dbReference>
<dbReference type="PROSITE" id="PS51066">
    <property type="entry name" value="ZF_FPG_2"/>
    <property type="match status" value="1"/>
</dbReference>
<gene>
    <name evidence="2" type="primary">mutM</name>
    <name evidence="2" type="synonym">fpg</name>
    <name type="ordered locus">SeHA_C4052</name>
</gene>
<name>FPG_SALHS</name>
<comment type="function">
    <text evidence="2">Involved in base excision repair of DNA damaged by oxidation or by mutagenic agents. Acts as a DNA glycosylase that recognizes and removes damaged bases. Has a preference for oxidized purines, such as 7,8-dihydro-8-oxoguanine (8-oxoG). Has AP (apurinic/apyrimidinic) lyase activity and introduces nicks in the DNA strand. Cleaves the DNA backbone by beta-delta elimination to generate a single-strand break at the site of the removed base with both 3'- and 5'-phosphates.</text>
</comment>
<comment type="catalytic activity">
    <reaction evidence="2">
        <text>Hydrolysis of DNA containing ring-opened 7-methylguanine residues, releasing 2,6-diamino-4-hydroxy-5-(N-methyl)formamidopyrimidine.</text>
        <dbReference type="EC" id="3.2.2.23"/>
    </reaction>
</comment>
<comment type="catalytic activity">
    <reaction evidence="2">
        <text>2'-deoxyribonucleotide-(2'-deoxyribose 5'-phosphate)-2'-deoxyribonucleotide-DNA = a 3'-end 2'-deoxyribonucleotide-(2,3-dehydro-2,3-deoxyribose 5'-phosphate)-DNA + a 5'-end 5'-phospho-2'-deoxyribonucleoside-DNA + H(+)</text>
        <dbReference type="Rhea" id="RHEA:66592"/>
        <dbReference type="Rhea" id="RHEA-COMP:13180"/>
        <dbReference type="Rhea" id="RHEA-COMP:16897"/>
        <dbReference type="Rhea" id="RHEA-COMP:17067"/>
        <dbReference type="ChEBI" id="CHEBI:15378"/>
        <dbReference type="ChEBI" id="CHEBI:136412"/>
        <dbReference type="ChEBI" id="CHEBI:157695"/>
        <dbReference type="ChEBI" id="CHEBI:167181"/>
        <dbReference type="EC" id="4.2.99.18"/>
    </reaction>
</comment>
<comment type="cofactor">
    <cofactor evidence="2">
        <name>Zn(2+)</name>
        <dbReference type="ChEBI" id="CHEBI:29105"/>
    </cofactor>
    <text evidence="2">Binds 1 zinc ion per subunit.</text>
</comment>
<comment type="subunit">
    <text evidence="2">Monomer.</text>
</comment>
<comment type="similarity">
    <text evidence="2">Belongs to the FPG family.</text>
</comment>
<reference key="1">
    <citation type="journal article" date="2011" name="J. Bacteriol.">
        <title>Comparative genomics of 28 Salmonella enterica isolates: evidence for CRISPR-mediated adaptive sublineage evolution.</title>
        <authorList>
            <person name="Fricke W.F."/>
            <person name="Mammel M.K."/>
            <person name="McDermott P.F."/>
            <person name="Tartera C."/>
            <person name="White D.G."/>
            <person name="Leclerc J.E."/>
            <person name="Ravel J."/>
            <person name="Cebula T.A."/>
        </authorList>
    </citation>
    <scope>NUCLEOTIDE SEQUENCE [LARGE SCALE GENOMIC DNA]</scope>
    <source>
        <strain>SL476</strain>
    </source>
</reference>
<feature type="initiator methionine" description="Removed" evidence="1">
    <location>
        <position position="1"/>
    </location>
</feature>
<feature type="chain" id="PRO_1000094074" description="Formamidopyrimidine-DNA glycosylase">
    <location>
        <begin position="2"/>
        <end position="269"/>
    </location>
</feature>
<feature type="zinc finger region" description="FPG-type" evidence="2">
    <location>
        <begin position="235"/>
        <end position="269"/>
    </location>
</feature>
<feature type="active site" description="Schiff-base intermediate with DNA" evidence="2">
    <location>
        <position position="2"/>
    </location>
</feature>
<feature type="active site" description="Proton donor" evidence="2">
    <location>
        <position position="3"/>
    </location>
</feature>
<feature type="active site" description="Proton donor; for beta-elimination activity" evidence="2">
    <location>
        <position position="57"/>
    </location>
</feature>
<feature type="active site" description="Proton donor; for delta-elimination activity" evidence="2">
    <location>
        <position position="259"/>
    </location>
</feature>
<feature type="binding site" evidence="2">
    <location>
        <position position="90"/>
    </location>
    <ligand>
        <name>DNA</name>
        <dbReference type="ChEBI" id="CHEBI:16991"/>
    </ligand>
</feature>
<feature type="binding site" evidence="2">
    <location>
        <position position="109"/>
    </location>
    <ligand>
        <name>DNA</name>
        <dbReference type="ChEBI" id="CHEBI:16991"/>
    </ligand>
</feature>
<feature type="binding site" evidence="2">
    <location>
        <position position="150"/>
    </location>
    <ligand>
        <name>DNA</name>
        <dbReference type="ChEBI" id="CHEBI:16991"/>
    </ligand>
</feature>
<organism>
    <name type="scientific">Salmonella heidelberg (strain SL476)</name>
    <dbReference type="NCBI Taxonomy" id="454169"/>
    <lineage>
        <taxon>Bacteria</taxon>
        <taxon>Pseudomonadati</taxon>
        <taxon>Pseudomonadota</taxon>
        <taxon>Gammaproteobacteria</taxon>
        <taxon>Enterobacterales</taxon>
        <taxon>Enterobacteriaceae</taxon>
        <taxon>Salmonella</taxon>
    </lineage>
</organism>
<accession>B4T9C0</accession>
<sequence length="269" mass="30233">MPELPEVETSRRGIEPHLVGATILHAHIRNGRLRWPVSDEIYRLSDTPVLSVQRRAKYLLLELPDGWIIIHLGMSGSLRILPEALPAEKHDHVDLVMSNGKILRYTDPRRFGAWLWTKELEGHNVLAHLGPEPLSDEFNGEYLQQKCAKKKTAIKPWLMDNKLVVGVGNIYASESLFAAGIHPDRLASSLSTEECDLLARVIKAVLLRSIEQGGTTLKDFLQSDGKPGYFAQELQVYGRKGEPCRVCGTPIVATKHAQRATFYCRHCQK</sequence>
<keyword id="KW-0227">DNA damage</keyword>
<keyword id="KW-0234">DNA repair</keyword>
<keyword id="KW-0238">DNA-binding</keyword>
<keyword id="KW-0326">Glycosidase</keyword>
<keyword id="KW-0378">Hydrolase</keyword>
<keyword id="KW-0456">Lyase</keyword>
<keyword id="KW-0479">Metal-binding</keyword>
<keyword id="KW-0511">Multifunctional enzyme</keyword>
<keyword id="KW-0862">Zinc</keyword>
<keyword id="KW-0863">Zinc-finger</keyword>
<protein>
    <recommendedName>
        <fullName evidence="2">Formamidopyrimidine-DNA glycosylase</fullName>
        <shortName evidence="2">Fapy-DNA glycosylase</shortName>
        <ecNumber evidence="2">3.2.2.23</ecNumber>
    </recommendedName>
    <alternativeName>
        <fullName evidence="2">DNA-(apurinic or apyrimidinic site) lyase MutM</fullName>
        <shortName evidence="2">AP lyase MutM</shortName>
        <ecNumber evidence="2">4.2.99.18</ecNumber>
    </alternativeName>
</protein>
<evidence type="ECO:0000250" key="1"/>
<evidence type="ECO:0000255" key="2">
    <source>
        <dbReference type="HAMAP-Rule" id="MF_00103"/>
    </source>
</evidence>